<keyword id="KW-0025">Alternative splicing</keyword>
<keyword id="KW-0143">Chaperone</keyword>
<keyword id="KW-0156">Chromatin regulator</keyword>
<keyword id="KW-0539">Nucleus</keyword>
<keyword id="KW-0597">Phosphoprotein</keyword>
<keyword id="KW-1267">Proteomics identification</keyword>
<keyword id="KW-1185">Reference proteome</keyword>
<name>HIRP3_HUMAN</name>
<proteinExistence type="evidence at protein level"/>
<gene>
    <name type="primary">HIRIP3</name>
</gene>
<sequence length="556" mass="61957">MAREKEMQEFTRSFFRGRPDLSTLTHSIVRRRYLAHSGRSHLEPEEKQALKRLVEEELLKMQVDEAASREDKLDLTKKGKRPPTPCSDPERKRFRFNSESESGSEASSPDYFGPPAKNGVAAEVSPAKEENPRRASKAVEESSDEERQRDLPAQRGEESSEEEEKGYKGKTRKKPVVKKQAPGKASVSRKQAREESEESEAEPVQRTAKKVEGNKGTKSLKESEQESEEEILAQKKEQREEEVEEEEKEEDEEKGDWKPRTRSNGRRKSAREERSCKQKSQAKRLLGDSDSEEEQKEAASSGDDSGRDREPPVQRKSEDRTQLKGGKRLSGSSEDEEDSGKGEPTAKGSRKMARLGSTSGEESDLEREVSDSEAGGGPQGERKNRSSKKSSRKGRTRSSSSSSDGSPEAKGGKAGSGRRGEDHPAVMRLKRYIRACGAHRNYKKLLGSCCSHKERLSILRAELEALGMKGTPSLGKCRALKEQREEAAEVASLDVANIISGSGRPRRRTAWNPLGEAAPPGELYRRTLDSDEERPRPAPPDWSHMRGIISSDGESN</sequence>
<dbReference type="EMBL" id="AJ223349">
    <property type="protein sequence ID" value="CAA11273.1"/>
    <property type="molecule type" value="mRNA"/>
</dbReference>
<dbReference type="EMBL" id="AJ223350">
    <property type="protein sequence ID" value="CAA11274.1"/>
    <property type="molecule type" value="mRNA"/>
</dbReference>
<dbReference type="EMBL" id="AJ223351">
    <property type="protein sequence ID" value="CAA11275.2"/>
    <property type="molecule type" value="mRNA"/>
</dbReference>
<dbReference type="EMBL" id="BX393533">
    <property type="status" value="NOT_ANNOTATED_CDS"/>
    <property type="molecule type" value="mRNA"/>
</dbReference>
<dbReference type="EMBL" id="AC093512">
    <property type="status" value="NOT_ANNOTATED_CDS"/>
    <property type="molecule type" value="Genomic_DNA"/>
</dbReference>
<dbReference type="EMBL" id="BC000588">
    <property type="protein sequence ID" value="AAH00588.1"/>
    <property type="molecule type" value="mRNA"/>
</dbReference>
<dbReference type="CCDS" id="CCDS10664.1">
    <molecule id="Q9BW71-1"/>
</dbReference>
<dbReference type="CCDS" id="CCDS58449.1">
    <molecule id="Q9BW71-3"/>
</dbReference>
<dbReference type="RefSeq" id="NP_001184252.1">
    <molecule id="Q9BW71-3"/>
    <property type="nucleotide sequence ID" value="NM_001197323.1"/>
</dbReference>
<dbReference type="RefSeq" id="NP_003600.2">
    <molecule id="Q9BW71-1"/>
    <property type="nucleotide sequence ID" value="NM_003609.4"/>
</dbReference>
<dbReference type="SMR" id="Q9BW71"/>
<dbReference type="BioGRID" id="114053">
    <property type="interactions" value="81"/>
</dbReference>
<dbReference type="FunCoup" id="Q9BW71">
    <property type="interactions" value="2604"/>
</dbReference>
<dbReference type="IntAct" id="Q9BW71">
    <property type="interactions" value="37"/>
</dbReference>
<dbReference type="MINT" id="Q9BW71"/>
<dbReference type="STRING" id="9606.ENSP00000279392"/>
<dbReference type="GlyGen" id="Q9BW71">
    <property type="glycosylation" value="1 site, 1 O-linked glycan (1 site)"/>
</dbReference>
<dbReference type="iPTMnet" id="Q9BW71"/>
<dbReference type="MetOSite" id="Q9BW71"/>
<dbReference type="PhosphoSitePlus" id="Q9BW71"/>
<dbReference type="BioMuta" id="HIRIP3"/>
<dbReference type="DMDM" id="116242511"/>
<dbReference type="jPOST" id="Q9BW71"/>
<dbReference type="MassIVE" id="Q9BW71"/>
<dbReference type="PaxDb" id="9606-ENSP00000279392"/>
<dbReference type="PeptideAtlas" id="Q9BW71"/>
<dbReference type="ProteomicsDB" id="42429"/>
<dbReference type="ProteomicsDB" id="79258">
    <molecule id="Q9BW71-1"/>
</dbReference>
<dbReference type="ProteomicsDB" id="79259">
    <molecule id="Q9BW71-2"/>
</dbReference>
<dbReference type="Pumba" id="Q9BW71"/>
<dbReference type="Antibodypedia" id="26925">
    <property type="antibodies" value="196 antibodies from 28 providers"/>
</dbReference>
<dbReference type="DNASU" id="8479"/>
<dbReference type="Ensembl" id="ENST00000279392.8">
    <molecule id="Q9BW71-1"/>
    <property type="protein sequence ID" value="ENSP00000279392.3"/>
    <property type="gene ID" value="ENSG00000149929.16"/>
</dbReference>
<dbReference type="Ensembl" id="ENST00000564026.1">
    <molecule id="Q9BW71-3"/>
    <property type="protein sequence ID" value="ENSP00000456824.1"/>
    <property type="gene ID" value="ENSG00000149929.16"/>
</dbReference>
<dbReference type="GeneID" id="8479"/>
<dbReference type="KEGG" id="hsa:8479"/>
<dbReference type="MANE-Select" id="ENST00000279392.8">
    <property type="protein sequence ID" value="ENSP00000279392.3"/>
    <property type="RefSeq nucleotide sequence ID" value="NM_003609.5"/>
    <property type="RefSeq protein sequence ID" value="NP_003600.2"/>
</dbReference>
<dbReference type="UCSC" id="uc002dve.4">
    <molecule id="Q9BW71-1"/>
    <property type="organism name" value="human"/>
</dbReference>
<dbReference type="AGR" id="HGNC:4917"/>
<dbReference type="CTD" id="8479"/>
<dbReference type="GeneCards" id="HIRIP3"/>
<dbReference type="HGNC" id="HGNC:4917">
    <property type="gene designation" value="HIRIP3"/>
</dbReference>
<dbReference type="HPA" id="ENSG00000149929">
    <property type="expression patterns" value="Low tissue specificity"/>
</dbReference>
<dbReference type="MIM" id="603365">
    <property type="type" value="gene"/>
</dbReference>
<dbReference type="neXtProt" id="NX_Q9BW71"/>
<dbReference type="OpenTargets" id="ENSG00000149929"/>
<dbReference type="PharmGKB" id="PA29294"/>
<dbReference type="VEuPathDB" id="HostDB:ENSG00000149929"/>
<dbReference type="eggNOG" id="ENOG502S0AG">
    <property type="taxonomic scope" value="Eukaryota"/>
</dbReference>
<dbReference type="GeneTree" id="ENSGT00390000014062"/>
<dbReference type="HOGENOM" id="CLU_038583_0_0_1"/>
<dbReference type="InParanoid" id="Q9BW71"/>
<dbReference type="OMA" id="NEMQEFT"/>
<dbReference type="OrthoDB" id="552755at2759"/>
<dbReference type="PAN-GO" id="Q9BW71">
    <property type="GO annotations" value="1 GO annotation based on evolutionary models"/>
</dbReference>
<dbReference type="PhylomeDB" id="Q9BW71"/>
<dbReference type="TreeFam" id="TF331753"/>
<dbReference type="PathwayCommons" id="Q9BW71"/>
<dbReference type="SignaLink" id="Q9BW71"/>
<dbReference type="BioGRID-ORCS" id="8479">
    <property type="hits" value="11 hits in 1165 CRISPR screens"/>
</dbReference>
<dbReference type="ChiTaRS" id="HIRIP3">
    <property type="organism name" value="human"/>
</dbReference>
<dbReference type="GeneWiki" id="HIRIP3"/>
<dbReference type="GenomeRNAi" id="8479"/>
<dbReference type="Pharos" id="Q9BW71">
    <property type="development level" value="Tdark"/>
</dbReference>
<dbReference type="PRO" id="PR:Q9BW71"/>
<dbReference type="Proteomes" id="UP000005640">
    <property type="component" value="Chromosome 16"/>
</dbReference>
<dbReference type="RNAct" id="Q9BW71">
    <property type="molecule type" value="protein"/>
</dbReference>
<dbReference type="Bgee" id="ENSG00000149929">
    <property type="expression patterns" value="Expressed in oocyte and 201 other cell types or tissues"/>
</dbReference>
<dbReference type="GO" id="GO:0005730">
    <property type="term" value="C:nucleolus"/>
    <property type="evidence" value="ECO:0000314"/>
    <property type="project" value="HPA"/>
</dbReference>
<dbReference type="GO" id="GO:0005654">
    <property type="term" value="C:nucleoplasm"/>
    <property type="evidence" value="ECO:0000314"/>
    <property type="project" value="HPA"/>
</dbReference>
<dbReference type="GO" id="GO:0005634">
    <property type="term" value="C:nucleus"/>
    <property type="evidence" value="ECO:0000314"/>
    <property type="project" value="UniProtKB"/>
</dbReference>
<dbReference type="GO" id="GO:0000511">
    <property type="term" value="F:H2A-H2B histone complex chaperone activity"/>
    <property type="evidence" value="ECO:0000314"/>
    <property type="project" value="UniProtKB"/>
</dbReference>
<dbReference type="GO" id="GO:0006325">
    <property type="term" value="P:chromatin organization"/>
    <property type="evidence" value="ECO:0000314"/>
    <property type="project" value="UniProtKB"/>
</dbReference>
<dbReference type="InterPro" id="IPR037647">
    <property type="entry name" value="HIRIP3"/>
</dbReference>
<dbReference type="InterPro" id="IPR019098">
    <property type="entry name" value="Histone_chaperone_domain_CHZ"/>
</dbReference>
<dbReference type="PANTHER" id="PTHR15410">
    <property type="entry name" value="HIRA-INTERACTING PROTEIN 3"/>
    <property type="match status" value="1"/>
</dbReference>
<dbReference type="PANTHER" id="PTHR15410:SF2">
    <property type="entry name" value="HIRA-INTERACTING PROTEIN 3"/>
    <property type="match status" value="1"/>
</dbReference>
<dbReference type="Pfam" id="PF09649">
    <property type="entry name" value="CHZ"/>
    <property type="match status" value="1"/>
</dbReference>
<dbReference type="SMART" id="SM01082">
    <property type="entry name" value="CHZ"/>
    <property type="match status" value="1"/>
</dbReference>
<evidence type="ECO:0000256" key="1">
    <source>
        <dbReference type="SAM" id="MobiDB-lite"/>
    </source>
</evidence>
<evidence type="ECO:0000269" key="2">
    <source>
    </source>
</evidence>
<evidence type="ECO:0000269" key="3">
    <source>
    </source>
</evidence>
<evidence type="ECO:0000269" key="4">
    <source>
    </source>
</evidence>
<evidence type="ECO:0000303" key="5">
    <source>
    </source>
</evidence>
<evidence type="ECO:0000303" key="6">
    <source ref="3"/>
</evidence>
<evidence type="ECO:0000305" key="7"/>
<evidence type="ECO:0007744" key="8">
    <source>
    </source>
</evidence>
<evidence type="ECO:0007744" key="9">
    <source>
    </source>
</evidence>
<evidence type="ECO:0007744" key="10">
    <source>
    </source>
</evidence>
<evidence type="ECO:0007744" key="11">
    <source>
    </source>
</evidence>
<evidence type="ECO:0007744" key="12">
    <source>
    </source>
</evidence>
<evidence type="ECO:0007744" key="13">
    <source>
    </source>
</evidence>
<evidence type="ECO:0007744" key="14">
    <source>
    </source>
</evidence>
<evidence type="ECO:0007744" key="15">
    <source>
    </source>
</evidence>
<reference key="1">
    <citation type="journal article" date="1998" name="Mol. Cell. Biol.">
        <title>Core histones and HIRIP3, a novel histone-binding protein, directly interact with WD repeat protein HIRA.</title>
        <authorList>
            <person name="Lorain S."/>
            <person name="Quivy J.-P."/>
            <person name="Monier-Gavelle F."/>
            <person name="Scamps C."/>
            <person name="Lecluse Y."/>
            <person name="Almouzni G."/>
            <person name="Lipinski M."/>
        </authorList>
    </citation>
    <scope>NUCLEOTIDE SEQUENCE [MRNA] (ISOFORMS 1 AND 2)</scope>
    <scope>FUNCTION</scope>
    <scope>INTERACTION WITH HIRA</scope>
    <scope>TISSUE SPECIFICITY</scope>
    <source>
        <tissue>Cervix carcinoma</tissue>
    </source>
</reference>
<reference key="2">
    <citation type="journal article" date="2007" name="Biol. Chem.">
        <title>HIRIP3 is a nuclear phosphoprotein interacting with and phosphorylated by the serine-threonine kinase CK2.</title>
        <authorList>
            <person name="Assrir N."/>
            <person name="Filhol O."/>
            <person name="Galisson F."/>
            <person name="Lipinski M."/>
        </authorList>
    </citation>
    <scope>NUCLEOTIDE SEQUENCE [MRNA] (ISOFORM 1)</scope>
    <scope>INTERACTION WITH CK2</scope>
    <scope>SUBCELLULAR LOCATION</scope>
    <scope>PHOSPHORYLATION</scope>
</reference>
<reference key="3">
    <citation type="submission" date="2003-04" db="EMBL/GenBank/DDBJ databases">
        <title>Full-length cDNA libraries and normalization.</title>
        <authorList>
            <person name="Li W.B."/>
            <person name="Gruber C."/>
            <person name="Jessee J."/>
            <person name="Polayes D."/>
        </authorList>
    </citation>
    <scope>NUCLEOTIDE SEQUENCE [LARGE SCALE MRNA] (ISOFORM 3)</scope>
    <source>
        <tissue>Neuroblastoma</tissue>
    </source>
</reference>
<reference key="4">
    <citation type="journal article" date="2004" name="Nature">
        <title>The sequence and analysis of duplication-rich human chromosome 16.</title>
        <authorList>
            <person name="Martin J."/>
            <person name="Han C."/>
            <person name="Gordon L.A."/>
            <person name="Terry A."/>
            <person name="Prabhakar S."/>
            <person name="She X."/>
            <person name="Xie G."/>
            <person name="Hellsten U."/>
            <person name="Chan Y.M."/>
            <person name="Altherr M."/>
            <person name="Couronne O."/>
            <person name="Aerts A."/>
            <person name="Bajorek E."/>
            <person name="Black S."/>
            <person name="Blumer H."/>
            <person name="Branscomb E."/>
            <person name="Brown N.C."/>
            <person name="Bruno W.J."/>
            <person name="Buckingham J.M."/>
            <person name="Callen D.F."/>
            <person name="Campbell C.S."/>
            <person name="Campbell M.L."/>
            <person name="Campbell E.W."/>
            <person name="Caoile C."/>
            <person name="Challacombe J.F."/>
            <person name="Chasteen L.A."/>
            <person name="Chertkov O."/>
            <person name="Chi H.C."/>
            <person name="Christensen M."/>
            <person name="Clark L.M."/>
            <person name="Cohn J.D."/>
            <person name="Denys M."/>
            <person name="Detter J.C."/>
            <person name="Dickson M."/>
            <person name="Dimitrijevic-Bussod M."/>
            <person name="Escobar J."/>
            <person name="Fawcett J.J."/>
            <person name="Flowers D."/>
            <person name="Fotopulos D."/>
            <person name="Glavina T."/>
            <person name="Gomez M."/>
            <person name="Gonzales E."/>
            <person name="Goodstein D."/>
            <person name="Goodwin L.A."/>
            <person name="Grady D.L."/>
            <person name="Grigoriev I."/>
            <person name="Groza M."/>
            <person name="Hammon N."/>
            <person name="Hawkins T."/>
            <person name="Haydu L."/>
            <person name="Hildebrand C.E."/>
            <person name="Huang W."/>
            <person name="Israni S."/>
            <person name="Jett J."/>
            <person name="Jewett P.B."/>
            <person name="Kadner K."/>
            <person name="Kimball H."/>
            <person name="Kobayashi A."/>
            <person name="Krawczyk M.-C."/>
            <person name="Leyba T."/>
            <person name="Longmire J.L."/>
            <person name="Lopez F."/>
            <person name="Lou Y."/>
            <person name="Lowry S."/>
            <person name="Ludeman T."/>
            <person name="Manohar C.F."/>
            <person name="Mark G.A."/>
            <person name="McMurray K.L."/>
            <person name="Meincke L.J."/>
            <person name="Morgan J."/>
            <person name="Moyzis R.K."/>
            <person name="Mundt M.O."/>
            <person name="Munk A.C."/>
            <person name="Nandkeshwar R.D."/>
            <person name="Pitluck S."/>
            <person name="Pollard M."/>
            <person name="Predki P."/>
            <person name="Parson-Quintana B."/>
            <person name="Ramirez L."/>
            <person name="Rash S."/>
            <person name="Retterer J."/>
            <person name="Ricke D.O."/>
            <person name="Robinson D.L."/>
            <person name="Rodriguez A."/>
            <person name="Salamov A."/>
            <person name="Saunders E.H."/>
            <person name="Scott D."/>
            <person name="Shough T."/>
            <person name="Stallings R.L."/>
            <person name="Stalvey M."/>
            <person name="Sutherland R.D."/>
            <person name="Tapia R."/>
            <person name="Tesmer J.G."/>
            <person name="Thayer N."/>
            <person name="Thompson L.S."/>
            <person name="Tice H."/>
            <person name="Torney D.C."/>
            <person name="Tran-Gyamfi M."/>
            <person name="Tsai M."/>
            <person name="Ulanovsky L.E."/>
            <person name="Ustaszewska A."/>
            <person name="Vo N."/>
            <person name="White P.S."/>
            <person name="Williams A.L."/>
            <person name="Wills P.L."/>
            <person name="Wu J.-R."/>
            <person name="Wu K."/>
            <person name="Yang J."/>
            <person name="DeJong P."/>
            <person name="Bruce D."/>
            <person name="Doggett N.A."/>
            <person name="Deaven L."/>
            <person name="Schmutz J."/>
            <person name="Grimwood J."/>
            <person name="Richardson P."/>
            <person name="Rokhsar D.S."/>
            <person name="Eichler E.E."/>
            <person name="Gilna P."/>
            <person name="Lucas S.M."/>
            <person name="Myers R.M."/>
            <person name="Rubin E.M."/>
            <person name="Pennacchio L.A."/>
        </authorList>
    </citation>
    <scope>NUCLEOTIDE SEQUENCE [LARGE SCALE GENOMIC DNA]</scope>
</reference>
<reference key="5">
    <citation type="journal article" date="2004" name="Genome Res.">
        <title>The status, quality, and expansion of the NIH full-length cDNA project: the Mammalian Gene Collection (MGC).</title>
        <authorList>
            <consortium name="The MGC Project Team"/>
        </authorList>
    </citation>
    <scope>NUCLEOTIDE SEQUENCE [LARGE SCALE MRNA] (ISOFORM 1)</scope>
    <source>
        <tissue>Skin</tissue>
    </source>
</reference>
<reference key="6">
    <citation type="journal article" date="2006" name="Cell">
        <title>Global, in vivo, and site-specific phosphorylation dynamics in signaling networks.</title>
        <authorList>
            <person name="Olsen J.V."/>
            <person name="Blagoev B."/>
            <person name="Gnad F."/>
            <person name="Macek B."/>
            <person name="Kumar C."/>
            <person name="Mortensen P."/>
            <person name="Mann M."/>
        </authorList>
    </citation>
    <scope>PHOSPHORYLATION [LARGE SCALE ANALYSIS] AT SER-125; SER-142; SER-143; SER-159; SER-160; SER-196; SER-199; SER-223; SER-227; SER-289 AND SER-291</scope>
    <scope>IDENTIFICATION BY MASS SPECTROMETRY [LARGE SCALE ANALYSIS]</scope>
    <source>
        <tissue>Cervix carcinoma</tissue>
    </source>
</reference>
<reference key="7">
    <citation type="journal article" date="2006" name="Nat. Biotechnol.">
        <title>A probability-based approach for high-throughput protein phosphorylation analysis and site localization.</title>
        <authorList>
            <person name="Beausoleil S.A."/>
            <person name="Villen J."/>
            <person name="Gerber S.A."/>
            <person name="Rush J."/>
            <person name="Gygi S.P."/>
        </authorList>
    </citation>
    <scope>PHOSPHORYLATION [LARGE SCALE ANALYSIS] AT THR-84; SER-87; SER-196; SER-227 AND SER-370</scope>
    <scope>IDENTIFICATION BY MASS SPECTROMETRY [LARGE SCALE ANALYSIS]</scope>
    <source>
        <tissue>Cervix carcinoma</tissue>
    </source>
</reference>
<reference key="8">
    <citation type="journal article" date="2008" name="J. Proteome Res.">
        <title>Phosphorylation analysis of primary human T lymphocytes using sequential IMAC and titanium oxide enrichment.</title>
        <authorList>
            <person name="Carrascal M."/>
            <person name="Ovelleiro D."/>
            <person name="Casas V."/>
            <person name="Gay M."/>
            <person name="Abian J."/>
        </authorList>
    </citation>
    <scope>IDENTIFICATION BY MASS SPECTROMETRY [LARGE SCALE ANALYSIS]</scope>
    <source>
        <tissue>T-cell</tissue>
    </source>
</reference>
<reference key="9">
    <citation type="journal article" date="2008" name="Proc. Natl. Acad. Sci. U.S.A.">
        <title>A quantitative atlas of mitotic phosphorylation.</title>
        <authorList>
            <person name="Dephoure N."/>
            <person name="Zhou C."/>
            <person name="Villen J."/>
            <person name="Beausoleil S.A."/>
            <person name="Bakalarski C.E."/>
            <person name="Elledge S.J."/>
            <person name="Gygi S.P."/>
        </authorList>
    </citation>
    <scope>PHOSPHORYLATION [LARGE SCALE ANALYSIS] AT SER-98; SER-100; SER-159; SER-160; SER-223; SER-227; SER-330; SER-332; SER-333; SER-357; THR-358; SER-359; SER-363 AND SER-372</scope>
    <scope>IDENTIFICATION BY MASS SPECTROMETRY [LARGE SCALE ANALYSIS]</scope>
    <source>
        <tissue>Cervix carcinoma</tissue>
    </source>
</reference>
<reference key="10">
    <citation type="journal article" date="2009" name="Anal. Chem.">
        <title>Lys-N and trypsin cover complementary parts of the phosphoproteome in a refined SCX-based approach.</title>
        <authorList>
            <person name="Gauci S."/>
            <person name="Helbig A.O."/>
            <person name="Slijper M."/>
            <person name="Krijgsveld J."/>
            <person name="Heck A.J."/>
            <person name="Mohammed S."/>
        </authorList>
    </citation>
    <scope>IDENTIFICATION BY MASS SPECTROMETRY [LARGE SCALE ANALYSIS]</scope>
</reference>
<reference key="11">
    <citation type="journal article" date="2009" name="Sci. Signal.">
        <title>Quantitative phosphoproteomic analysis of T cell receptor signaling reveals system-wide modulation of protein-protein interactions.</title>
        <authorList>
            <person name="Mayya V."/>
            <person name="Lundgren D.H."/>
            <person name="Hwang S.-I."/>
            <person name="Rezaul K."/>
            <person name="Wu L."/>
            <person name="Eng J.K."/>
            <person name="Rodionov V."/>
            <person name="Han D.K."/>
        </authorList>
    </citation>
    <scope>PHOSPHORYLATION [LARGE SCALE ANALYSIS] AT SER-27; SER-125; SER-196; SER-223 AND SER-227</scope>
    <scope>IDENTIFICATION BY MASS SPECTROMETRY [LARGE SCALE ANALYSIS]</scope>
    <source>
        <tissue>Leukemic T-cell</tissue>
    </source>
</reference>
<reference key="12">
    <citation type="journal article" date="2010" name="Sci. Signal.">
        <title>Quantitative phosphoproteomics reveals widespread full phosphorylation site occupancy during mitosis.</title>
        <authorList>
            <person name="Olsen J.V."/>
            <person name="Vermeulen M."/>
            <person name="Santamaria A."/>
            <person name="Kumar C."/>
            <person name="Miller M.L."/>
            <person name="Jensen L.J."/>
            <person name="Gnad F."/>
            <person name="Cox J."/>
            <person name="Jensen T.S."/>
            <person name="Nigg E.A."/>
            <person name="Brunak S."/>
            <person name="Mann M."/>
        </authorList>
    </citation>
    <scope>PHOSPHORYLATION [LARGE SCALE ANALYSIS] AT SER-125; SER-159; SER-160; SER-196; SER-199; SER-227; SER-289; SER-291; SER-330; SER-332; SER-333; SER-550; SER-551 AND SER-555</scope>
    <scope>IDENTIFICATION BY MASS SPECTROMETRY [LARGE SCALE ANALYSIS]</scope>
    <source>
        <tissue>Cervix carcinoma</tissue>
    </source>
</reference>
<reference key="13">
    <citation type="journal article" date="2011" name="BMC Syst. Biol.">
        <title>Initial characterization of the human central proteome.</title>
        <authorList>
            <person name="Burkard T.R."/>
            <person name="Planyavsky M."/>
            <person name="Kaupe I."/>
            <person name="Breitwieser F.P."/>
            <person name="Buerckstuemmer T."/>
            <person name="Bennett K.L."/>
            <person name="Superti-Furga G."/>
            <person name="Colinge J."/>
        </authorList>
    </citation>
    <scope>IDENTIFICATION BY MASS SPECTROMETRY [LARGE SCALE ANALYSIS]</scope>
</reference>
<reference key="14">
    <citation type="journal article" date="2011" name="Sci. Signal.">
        <title>System-wide temporal characterization of the proteome and phosphoproteome of human embryonic stem cell differentiation.</title>
        <authorList>
            <person name="Rigbolt K.T."/>
            <person name="Prokhorova T.A."/>
            <person name="Akimov V."/>
            <person name="Henningsen J."/>
            <person name="Johansen P.T."/>
            <person name="Kratchmarova I."/>
            <person name="Kassem M."/>
            <person name="Mann M."/>
            <person name="Olsen J.V."/>
            <person name="Blagoev B."/>
        </authorList>
    </citation>
    <scope>PHOSPHORYLATION [LARGE SCALE ANALYSIS] AT SER-125; SER-142; SER-143; SER-159; SER-160; SER-196; SER-199; SER-223; SER-227; SER-289; SER-291; SER-330; SER-332; SER-333; SER-357; THR-358; SER-359; SER-363 AND SER-370</scope>
    <scope>IDENTIFICATION BY MASS SPECTROMETRY [LARGE SCALE ANALYSIS]</scope>
</reference>
<reference key="15">
    <citation type="journal article" date="2013" name="J. Proteome Res.">
        <title>Toward a comprehensive characterization of a human cancer cell phosphoproteome.</title>
        <authorList>
            <person name="Zhou H."/>
            <person name="Di Palma S."/>
            <person name="Preisinger C."/>
            <person name="Peng M."/>
            <person name="Polat A.N."/>
            <person name="Heck A.J."/>
            <person name="Mohammed S."/>
        </authorList>
    </citation>
    <scope>PHOSPHORYLATION [LARGE SCALE ANALYSIS] AT SER-27; SER-125; SER-159; SER-160; SER-196; SER-199; SER-223; SER-227; SER-289; SER-291; SER-330; SER-332; SER-333; SER-370; THR-471 AND SER-530</scope>
    <scope>IDENTIFICATION BY MASS SPECTROMETRY [LARGE SCALE ANALYSIS]</scope>
    <source>
        <tissue>Cervix carcinoma</tissue>
        <tissue>Erythroleukemia</tissue>
    </source>
</reference>
<reference key="16">
    <citation type="journal article" date="2014" name="J. Proteomics">
        <title>An enzyme assisted RP-RPLC approach for in-depth analysis of human liver phosphoproteome.</title>
        <authorList>
            <person name="Bian Y."/>
            <person name="Song C."/>
            <person name="Cheng K."/>
            <person name="Dong M."/>
            <person name="Wang F."/>
            <person name="Huang J."/>
            <person name="Sun D."/>
            <person name="Wang L."/>
            <person name="Ye M."/>
            <person name="Zou H."/>
        </authorList>
    </citation>
    <scope>PHOSPHORYLATION [LARGE SCALE ANALYSIS] AT SER-555</scope>
    <scope>IDENTIFICATION BY MASS SPECTROMETRY [LARGE SCALE ANALYSIS]</scope>
    <source>
        <tissue>Liver</tissue>
    </source>
</reference>
<reference key="17">
    <citation type="journal article" date="2024" name="Cells">
        <title>Identification and Characterization of HIRIP3 as a Histone H2A Chaperone.</title>
        <authorList>
            <person name="Ignatyeva M."/>
            <person name="Patel A.K.M."/>
            <person name="Ibrahim A."/>
            <person name="Albiheyri R.S."/>
            <person name="Zari A.T."/>
            <person name="Bahieldin A."/>
            <person name="Bronner C."/>
            <person name="Sabir J.S.M."/>
            <person name="Hamiche A."/>
        </authorList>
    </citation>
    <scope>FUNCTION</scope>
    <scope>INTERACTION WITH THE HISTONE H2A-H2B COMPLEX AND CK2</scope>
    <scope>SUBCELLULAR LOCATION</scope>
    <scope>IDENTIFICATION BY MASS SPECTROMETRY</scope>
</reference>
<accession>Q9BW71</accession>
<accession>H3BSR3</accession>
<accession>O75707</accession>
<accession>O75708</accession>
<organism>
    <name type="scientific">Homo sapiens</name>
    <name type="common">Human</name>
    <dbReference type="NCBI Taxonomy" id="9606"/>
    <lineage>
        <taxon>Eukaryota</taxon>
        <taxon>Metazoa</taxon>
        <taxon>Chordata</taxon>
        <taxon>Craniata</taxon>
        <taxon>Vertebrata</taxon>
        <taxon>Euteleostomi</taxon>
        <taxon>Mammalia</taxon>
        <taxon>Eutheria</taxon>
        <taxon>Euarchontoglires</taxon>
        <taxon>Primates</taxon>
        <taxon>Haplorrhini</taxon>
        <taxon>Catarrhini</taxon>
        <taxon>Hominidae</taxon>
        <taxon>Homo</taxon>
    </lineage>
</organism>
<comment type="function">
    <text evidence="3 4">Histone chaperone that carries a H2A-H2B histone complex and facilitates its deposition onto chromatin.</text>
</comment>
<comment type="subunit">
    <text evidence="2 3 4">Interacts (via C-terminus) with histone H2A-H2B dimers; the interaction is direct (PubMed:38334665, PubMed:9710638). Interacts with HIRA (PubMed:9710638). Interacts with CK2 (PubMed:17391060, PubMed:38334665).</text>
</comment>
<comment type="interaction">
    <interactant intactId="EBI-723624">
        <id>Q9BW71</id>
    </interactant>
    <interactant intactId="EBI-8796759">
        <id>Q01433</id>
        <label>AMPD2</label>
    </interactant>
    <organismsDiffer>false</organismsDiffer>
    <experiments>4</experiments>
</comment>
<comment type="interaction">
    <interactant intactId="EBI-723624">
        <id>Q9BW71</id>
    </interactant>
    <interactant intactId="EBI-466029">
        <id>P42858</id>
        <label>HTT</label>
    </interactant>
    <organismsDiffer>false</organismsDiffer>
    <experiments>6</experiments>
</comment>
<comment type="interaction">
    <interactant intactId="EBI-723624">
        <id>Q9BW71</id>
    </interactant>
    <interactant intactId="EBI-12143041">
        <id>Q9HBY8-2</id>
        <label>SGK2</label>
    </interactant>
    <organismsDiffer>false</organismsDiffer>
    <experiments>5</experiments>
</comment>
<comment type="subcellular location">
    <subcellularLocation>
        <location evidence="2 3">Nucleus</location>
    </subcellularLocation>
    <text>Nuclear throughout the cell cycle and is excluded from condensed chromatin during mitosis.</text>
</comment>
<comment type="alternative products">
    <event type="alternative splicing"/>
    <isoform>
        <id>Q9BW71-1</id>
        <name>1</name>
        <sequence type="displayed"/>
    </isoform>
    <isoform>
        <id>Q9BW71-2</id>
        <name>2</name>
        <sequence type="described" ref="VSP_003877"/>
    </isoform>
    <isoform>
        <id>Q9BW71-3</id>
        <name>3</name>
        <sequence type="described" ref="VSP_046024 VSP_046025"/>
    </isoform>
</comment>
<comment type="tissue specificity">
    <text evidence="4">Widely expressed. Isoform 1 is predominant in skeletal muscle. Isoform 2 is predominant in liver and heart.</text>
</comment>
<comment type="PTM">
    <text evidence="2">Phosphorylated by CK2.</text>
</comment>
<protein>
    <recommendedName>
        <fullName>HIRA-interacting protein 3</fullName>
    </recommendedName>
</protein>
<feature type="chain" id="PRO_0000083989" description="HIRA-interacting protein 3">
    <location>
        <begin position="1"/>
        <end position="556"/>
    </location>
</feature>
<feature type="region of interest" description="Disordered" evidence="1">
    <location>
        <begin position="64"/>
        <end position="426"/>
    </location>
</feature>
<feature type="region of interest" description="Interaction with the histone H2A-H2B complex" evidence="3">
    <location>
        <begin position="403"/>
        <end position="527"/>
    </location>
</feature>
<feature type="region of interest" description="Disordered" evidence="1">
    <location>
        <begin position="502"/>
        <end position="556"/>
    </location>
</feature>
<feature type="compositionally biased region" description="Basic and acidic residues" evidence="1">
    <location>
        <begin position="64"/>
        <end position="77"/>
    </location>
</feature>
<feature type="compositionally biased region" description="Low complexity" evidence="1">
    <location>
        <begin position="99"/>
        <end position="108"/>
    </location>
</feature>
<feature type="compositionally biased region" description="Basic and acidic residues" evidence="1">
    <location>
        <begin position="126"/>
        <end position="158"/>
    </location>
</feature>
<feature type="compositionally biased region" description="Basic residues" evidence="1">
    <location>
        <begin position="168"/>
        <end position="177"/>
    </location>
</feature>
<feature type="compositionally biased region" description="Basic and acidic residues" evidence="1">
    <location>
        <begin position="209"/>
        <end position="224"/>
    </location>
</feature>
<feature type="compositionally biased region" description="Acidic residues" evidence="1">
    <location>
        <begin position="240"/>
        <end position="254"/>
    </location>
</feature>
<feature type="compositionally biased region" description="Basic residues" evidence="1">
    <location>
        <begin position="260"/>
        <end position="269"/>
    </location>
</feature>
<feature type="compositionally biased region" description="Basic and acidic residues" evidence="1">
    <location>
        <begin position="304"/>
        <end position="322"/>
    </location>
</feature>
<feature type="compositionally biased region" description="Basic residues" evidence="1">
    <location>
        <begin position="385"/>
        <end position="396"/>
    </location>
</feature>
<feature type="compositionally biased region" description="Basic and acidic residues" evidence="1">
    <location>
        <begin position="523"/>
        <end position="536"/>
    </location>
</feature>
<feature type="modified residue" description="Phosphoserine" evidence="11 14">
    <location>
        <position position="27"/>
    </location>
</feature>
<feature type="modified residue" description="Phosphothreonine" evidence="8">
    <location>
        <position position="84"/>
    </location>
</feature>
<feature type="modified residue" description="Phosphoserine" evidence="8">
    <location>
        <position position="87"/>
    </location>
</feature>
<feature type="modified residue" description="Phosphoserine" evidence="10">
    <location>
        <position position="98"/>
    </location>
</feature>
<feature type="modified residue" description="Phosphoserine" evidence="10">
    <location>
        <position position="100"/>
    </location>
</feature>
<feature type="modified residue" description="Phosphoserine" evidence="9 11 12 13 14">
    <location>
        <position position="125"/>
    </location>
</feature>
<feature type="modified residue" description="Phosphoserine" evidence="9 13">
    <location>
        <position position="142"/>
    </location>
</feature>
<feature type="modified residue" description="Phosphoserine" evidence="9 13">
    <location>
        <position position="143"/>
    </location>
</feature>
<feature type="modified residue" description="Phosphoserine" evidence="9 10 12 13 14">
    <location>
        <position position="159"/>
    </location>
</feature>
<feature type="modified residue" description="Phosphoserine" evidence="9 10 12 13 14">
    <location>
        <position position="160"/>
    </location>
</feature>
<feature type="modified residue" description="Phosphoserine" evidence="8 9 11 12 13 14">
    <location>
        <position position="196"/>
    </location>
</feature>
<feature type="modified residue" description="Phosphoserine" evidence="9 12 13 14">
    <location>
        <position position="199"/>
    </location>
</feature>
<feature type="modified residue" description="Phosphoserine" evidence="9 10 11 13 14">
    <location>
        <position position="223"/>
    </location>
</feature>
<feature type="modified residue" description="Phosphoserine" evidence="8 9 10 11 12 13 14">
    <location>
        <position position="227"/>
    </location>
</feature>
<feature type="modified residue" description="Phosphoserine" evidence="9 12 13 14">
    <location>
        <position position="289"/>
    </location>
</feature>
<feature type="modified residue" description="Phosphoserine" evidence="9 12 13 14">
    <location>
        <position position="291"/>
    </location>
</feature>
<feature type="modified residue" description="Phosphoserine" evidence="10 12 13 14">
    <location>
        <position position="330"/>
    </location>
</feature>
<feature type="modified residue" description="Phosphoserine" evidence="10 12 13 14">
    <location>
        <position position="332"/>
    </location>
</feature>
<feature type="modified residue" description="Phosphoserine" evidence="10 12 13 14">
    <location>
        <position position="333"/>
    </location>
</feature>
<feature type="modified residue" description="Phosphoserine" evidence="10 13">
    <location>
        <position position="357"/>
    </location>
</feature>
<feature type="modified residue" description="Phosphothreonine" evidence="10 13">
    <location>
        <position position="358"/>
    </location>
</feature>
<feature type="modified residue" description="Phosphoserine" evidence="10 13">
    <location>
        <position position="359"/>
    </location>
</feature>
<feature type="modified residue" description="Phosphoserine" evidence="10 13">
    <location>
        <position position="363"/>
    </location>
</feature>
<feature type="modified residue" description="Phosphoserine" evidence="8 13 14">
    <location>
        <position position="370"/>
    </location>
</feature>
<feature type="modified residue" description="Phosphoserine" evidence="10">
    <location>
        <position position="372"/>
    </location>
</feature>
<feature type="modified residue" description="Phosphothreonine" evidence="14">
    <location>
        <position position="471"/>
    </location>
</feature>
<feature type="modified residue" description="Phosphoserine" evidence="14">
    <location>
        <position position="530"/>
    </location>
</feature>
<feature type="modified residue" description="Phosphoserine" evidence="12">
    <location>
        <position position="550"/>
    </location>
</feature>
<feature type="modified residue" description="Phosphoserine" evidence="12">
    <location>
        <position position="551"/>
    </location>
</feature>
<feature type="modified residue" description="Phosphoserine" evidence="12 15">
    <location>
        <position position="555"/>
    </location>
</feature>
<feature type="splice variant" id="VSP_003877" description="In isoform 2." evidence="5">
    <location>
        <begin position="101"/>
        <end position="413"/>
    </location>
</feature>
<feature type="splice variant" id="VSP_046024" description="In isoform 3." evidence="6">
    <original>ESGSEASSPDYFGPPAKNGVAAEVSPAKEENPRRASKAVEESSDEERQRDLPAQRGEESSEEEEKGYKGKTRKKP</original>
    <variation>GWLRSPWRGPPGCDEAEALHSGLWCPSKLQEAVGLLLLTQGAPEYPPGRTGSARHEGYPFPREVSGPEGAEGGGS</variation>
    <location>
        <begin position="101"/>
        <end position="175"/>
    </location>
</feature>
<feature type="splice variant" id="VSP_046025" description="In isoform 3." evidence="6">
    <location>
        <begin position="176"/>
        <end position="556"/>
    </location>
</feature>
<feature type="sequence variant" id="VAR_051033" description="In dbSNP:rs35431046.">
    <original>A</original>
    <variation>V</variation>
    <location>
        <position position="496"/>
    </location>
</feature>
<feature type="sequence variant" id="VAR_028115" description="In dbSNP:rs11643314.">
    <original>G</original>
    <variation>W</variation>
    <location>
        <position position="521"/>
    </location>
</feature>
<feature type="sequence conflict" description="In Ref. 1; CAA11273/CAA11274/CAA11275 and 2." evidence="7" ref="1 2">
    <original>L</original>
    <variation>P</variation>
    <location>
        <position position="58"/>
    </location>
</feature>